<sequence length="338" mass="37957">MTTVQEAVPNLIPTQDATPRPAPKKVEAGVKLRGADKVARIPVKIIPTDELPKKPDWIRVRIPVSPEVDRIKQLLRKHKLHSVCEEASCPNLGECFSGGTATFMIMGDICTRRCPFCDVGHGRPKPLDLDEPKNLAVAIADLRLKYVVITSVDRDDLRDGGAQHFADCIREIRALSPGVQLETLVPDYRGRMDVALEITAQEPPDVFNHNLETVPRLYKAARPGSDYDWSLDLLQKFKQLVPHVPTKSGLMLGLGETDEEVIEVMHRMREHDIDMLTLGQYLQPSRSHLPVQRFVHPDTFAWFAEEGYKMGFKNVASGPLVRSSYHADQQAHEAKIKL</sequence>
<evidence type="ECO:0000255" key="1">
    <source>
        <dbReference type="HAMAP-Rule" id="MF_00206"/>
    </source>
</evidence>
<evidence type="ECO:0000255" key="2">
    <source>
        <dbReference type="PROSITE-ProRule" id="PRU01266"/>
    </source>
</evidence>
<evidence type="ECO:0000256" key="3">
    <source>
        <dbReference type="SAM" id="MobiDB-lite"/>
    </source>
</evidence>
<proteinExistence type="inferred from homology"/>
<feature type="chain" id="PRO_1000012258" description="Lipoyl synthase">
    <location>
        <begin position="1"/>
        <end position="338"/>
    </location>
</feature>
<feature type="domain" description="Radical SAM core" evidence="2">
    <location>
        <begin position="96"/>
        <end position="313"/>
    </location>
</feature>
<feature type="region of interest" description="Disordered" evidence="3">
    <location>
        <begin position="1"/>
        <end position="24"/>
    </location>
</feature>
<feature type="binding site" evidence="1">
    <location>
        <position position="84"/>
    </location>
    <ligand>
        <name>[4Fe-4S] cluster</name>
        <dbReference type="ChEBI" id="CHEBI:49883"/>
        <label>1</label>
    </ligand>
</feature>
<feature type="binding site" evidence="1">
    <location>
        <position position="89"/>
    </location>
    <ligand>
        <name>[4Fe-4S] cluster</name>
        <dbReference type="ChEBI" id="CHEBI:49883"/>
        <label>1</label>
    </ligand>
</feature>
<feature type="binding site" evidence="1">
    <location>
        <position position="95"/>
    </location>
    <ligand>
        <name>[4Fe-4S] cluster</name>
        <dbReference type="ChEBI" id="CHEBI:49883"/>
        <label>1</label>
    </ligand>
</feature>
<feature type="binding site" evidence="1">
    <location>
        <position position="110"/>
    </location>
    <ligand>
        <name>[4Fe-4S] cluster</name>
        <dbReference type="ChEBI" id="CHEBI:49883"/>
        <label>2</label>
        <note>4Fe-4S-S-AdoMet</note>
    </ligand>
</feature>
<feature type="binding site" evidence="1">
    <location>
        <position position="114"/>
    </location>
    <ligand>
        <name>[4Fe-4S] cluster</name>
        <dbReference type="ChEBI" id="CHEBI:49883"/>
        <label>2</label>
        <note>4Fe-4S-S-AdoMet</note>
    </ligand>
</feature>
<feature type="binding site" evidence="1">
    <location>
        <position position="117"/>
    </location>
    <ligand>
        <name>[4Fe-4S] cluster</name>
        <dbReference type="ChEBI" id="CHEBI:49883"/>
        <label>2</label>
        <note>4Fe-4S-S-AdoMet</note>
    </ligand>
</feature>
<feature type="binding site" evidence="1">
    <location>
        <position position="324"/>
    </location>
    <ligand>
        <name>[4Fe-4S] cluster</name>
        <dbReference type="ChEBI" id="CHEBI:49883"/>
        <label>1</label>
    </ligand>
</feature>
<reference key="1">
    <citation type="submission" date="2007-05" db="EMBL/GenBank/DDBJ databases">
        <title>Complete sequence of Pseudomonas putida F1.</title>
        <authorList>
            <consortium name="US DOE Joint Genome Institute"/>
            <person name="Copeland A."/>
            <person name="Lucas S."/>
            <person name="Lapidus A."/>
            <person name="Barry K."/>
            <person name="Detter J.C."/>
            <person name="Glavina del Rio T."/>
            <person name="Hammon N."/>
            <person name="Israni S."/>
            <person name="Dalin E."/>
            <person name="Tice H."/>
            <person name="Pitluck S."/>
            <person name="Chain P."/>
            <person name="Malfatti S."/>
            <person name="Shin M."/>
            <person name="Vergez L."/>
            <person name="Schmutz J."/>
            <person name="Larimer F."/>
            <person name="Land M."/>
            <person name="Hauser L."/>
            <person name="Kyrpides N."/>
            <person name="Lykidis A."/>
            <person name="Parales R."/>
            <person name="Richardson P."/>
        </authorList>
    </citation>
    <scope>NUCLEOTIDE SEQUENCE [LARGE SCALE GENOMIC DNA]</scope>
    <source>
        <strain>ATCC 700007 / DSM 6899 / JCM 31910 / BCRC 17059 / LMG 24140 / F1</strain>
    </source>
</reference>
<keyword id="KW-0004">4Fe-4S</keyword>
<keyword id="KW-0963">Cytoplasm</keyword>
<keyword id="KW-0408">Iron</keyword>
<keyword id="KW-0411">Iron-sulfur</keyword>
<keyword id="KW-0479">Metal-binding</keyword>
<keyword id="KW-0949">S-adenosyl-L-methionine</keyword>
<keyword id="KW-0808">Transferase</keyword>
<name>LIPA_PSEP1</name>
<organism>
    <name type="scientific">Pseudomonas putida (strain ATCC 700007 / DSM 6899 / JCM 31910 / BCRC 17059 / LMG 24140 / F1)</name>
    <dbReference type="NCBI Taxonomy" id="351746"/>
    <lineage>
        <taxon>Bacteria</taxon>
        <taxon>Pseudomonadati</taxon>
        <taxon>Pseudomonadota</taxon>
        <taxon>Gammaproteobacteria</taxon>
        <taxon>Pseudomonadales</taxon>
        <taxon>Pseudomonadaceae</taxon>
        <taxon>Pseudomonas</taxon>
    </lineage>
</organism>
<accession>A5W9I5</accession>
<protein>
    <recommendedName>
        <fullName evidence="1">Lipoyl synthase</fullName>
        <ecNumber evidence="1">2.8.1.8</ecNumber>
    </recommendedName>
    <alternativeName>
        <fullName evidence="1">Lip-syn</fullName>
        <shortName evidence="1">LS</shortName>
    </alternativeName>
    <alternativeName>
        <fullName evidence="1">Lipoate synthase</fullName>
    </alternativeName>
    <alternativeName>
        <fullName evidence="1">Lipoic acid synthase</fullName>
    </alternativeName>
    <alternativeName>
        <fullName evidence="1">Sulfur insertion protein LipA</fullName>
    </alternativeName>
</protein>
<comment type="function">
    <text evidence="1">Catalyzes the radical-mediated insertion of two sulfur atoms into the C-6 and C-8 positions of the octanoyl moiety bound to the lipoyl domains of lipoate-dependent enzymes, thereby converting the octanoylated domains into lipoylated derivatives.</text>
</comment>
<comment type="catalytic activity">
    <reaction evidence="1">
        <text>[[Fe-S] cluster scaffold protein carrying a second [4Fe-4S](2+) cluster] + N(6)-octanoyl-L-lysyl-[protein] + 2 oxidized [2Fe-2S]-[ferredoxin] + 2 S-adenosyl-L-methionine + 4 H(+) = [[Fe-S] cluster scaffold protein] + N(6)-[(R)-dihydrolipoyl]-L-lysyl-[protein] + 4 Fe(3+) + 2 hydrogen sulfide + 2 5'-deoxyadenosine + 2 L-methionine + 2 reduced [2Fe-2S]-[ferredoxin]</text>
        <dbReference type="Rhea" id="RHEA:16585"/>
        <dbReference type="Rhea" id="RHEA-COMP:9928"/>
        <dbReference type="Rhea" id="RHEA-COMP:10000"/>
        <dbReference type="Rhea" id="RHEA-COMP:10001"/>
        <dbReference type="Rhea" id="RHEA-COMP:10475"/>
        <dbReference type="Rhea" id="RHEA-COMP:14568"/>
        <dbReference type="Rhea" id="RHEA-COMP:14569"/>
        <dbReference type="ChEBI" id="CHEBI:15378"/>
        <dbReference type="ChEBI" id="CHEBI:17319"/>
        <dbReference type="ChEBI" id="CHEBI:29034"/>
        <dbReference type="ChEBI" id="CHEBI:29919"/>
        <dbReference type="ChEBI" id="CHEBI:33722"/>
        <dbReference type="ChEBI" id="CHEBI:33737"/>
        <dbReference type="ChEBI" id="CHEBI:33738"/>
        <dbReference type="ChEBI" id="CHEBI:57844"/>
        <dbReference type="ChEBI" id="CHEBI:59789"/>
        <dbReference type="ChEBI" id="CHEBI:78809"/>
        <dbReference type="ChEBI" id="CHEBI:83100"/>
        <dbReference type="EC" id="2.8.1.8"/>
    </reaction>
</comment>
<comment type="cofactor">
    <cofactor evidence="1">
        <name>[4Fe-4S] cluster</name>
        <dbReference type="ChEBI" id="CHEBI:49883"/>
    </cofactor>
    <text evidence="1">Binds 2 [4Fe-4S] clusters per subunit. One cluster is coordinated with 3 cysteines and an exchangeable S-adenosyl-L-methionine.</text>
</comment>
<comment type="pathway">
    <text evidence="1">Protein modification; protein lipoylation via endogenous pathway; protein N(6)-(lipoyl)lysine from octanoyl-[acyl-carrier-protein]: step 2/2.</text>
</comment>
<comment type="subcellular location">
    <subcellularLocation>
        <location evidence="1">Cytoplasm</location>
    </subcellularLocation>
</comment>
<comment type="similarity">
    <text evidence="1">Belongs to the radical SAM superfamily. Lipoyl synthase family.</text>
</comment>
<gene>
    <name evidence="1" type="primary">lipA</name>
    <name type="ordered locus">Pput_4675</name>
</gene>
<dbReference type="EC" id="2.8.1.8" evidence="1"/>
<dbReference type="EMBL" id="CP000712">
    <property type="protein sequence ID" value="ABQ80795.1"/>
    <property type="molecule type" value="Genomic_DNA"/>
</dbReference>
<dbReference type="SMR" id="A5W9I5"/>
<dbReference type="KEGG" id="ppf:Pput_4675"/>
<dbReference type="eggNOG" id="COG0320">
    <property type="taxonomic scope" value="Bacteria"/>
</dbReference>
<dbReference type="HOGENOM" id="CLU_033144_2_1_6"/>
<dbReference type="UniPathway" id="UPA00538">
    <property type="reaction ID" value="UER00593"/>
</dbReference>
<dbReference type="GO" id="GO:0005737">
    <property type="term" value="C:cytoplasm"/>
    <property type="evidence" value="ECO:0007669"/>
    <property type="project" value="UniProtKB-SubCell"/>
</dbReference>
<dbReference type="GO" id="GO:0051539">
    <property type="term" value="F:4 iron, 4 sulfur cluster binding"/>
    <property type="evidence" value="ECO:0007669"/>
    <property type="project" value="UniProtKB-UniRule"/>
</dbReference>
<dbReference type="GO" id="GO:0016992">
    <property type="term" value="F:lipoate synthase activity"/>
    <property type="evidence" value="ECO:0007669"/>
    <property type="project" value="UniProtKB-UniRule"/>
</dbReference>
<dbReference type="GO" id="GO:0046872">
    <property type="term" value="F:metal ion binding"/>
    <property type="evidence" value="ECO:0007669"/>
    <property type="project" value="UniProtKB-KW"/>
</dbReference>
<dbReference type="CDD" id="cd01335">
    <property type="entry name" value="Radical_SAM"/>
    <property type="match status" value="1"/>
</dbReference>
<dbReference type="FunFam" id="3.20.20.70:FF:000023">
    <property type="entry name" value="Lipoyl synthase"/>
    <property type="match status" value="1"/>
</dbReference>
<dbReference type="Gene3D" id="3.20.20.70">
    <property type="entry name" value="Aldolase class I"/>
    <property type="match status" value="1"/>
</dbReference>
<dbReference type="HAMAP" id="MF_00206">
    <property type="entry name" value="Lipoyl_synth"/>
    <property type="match status" value="1"/>
</dbReference>
<dbReference type="InterPro" id="IPR013785">
    <property type="entry name" value="Aldolase_TIM"/>
</dbReference>
<dbReference type="InterPro" id="IPR006638">
    <property type="entry name" value="Elp3/MiaA/NifB-like_rSAM"/>
</dbReference>
<dbReference type="InterPro" id="IPR031691">
    <property type="entry name" value="LIAS_N"/>
</dbReference>
<dbReference type="InterPro" id="IPR003698">
    <property type="entry name" value="Lipoyl_synth"/>
</dbReference>
<dbReference type="InterPro" id="IPR007197">
    <property type="entry name" value="rSAM"/>
</dbReference>
<dbReference type="NCBIfam" id="TIGR00510">
    <property type="entry name" value="lipA"/>
    <property type="match status" value="1"/>
</dbReference>
<dbReference type="NCBIfam" id="NF004019">
    <property type="entry name" value="PRK05481.1"/>
    <property type="match status" value="1"/>
</dbReference>
<dbReference type="NCBIfam" id="NF009544">
    <property type="entry name" value="PRK12928.1"/>
    <property type="match status" value="1"/>
</dbReference>
<dbReference type="PANTHER" id="PTHR10949">
    <property type="entry name" value="LIPOYL SYNTHASE"/>
    <property type="match status" value="1"/>
</dbReference>
<dbReference type="PANTHER" id="PTHR10949:SF0">
    <property type="entry name" value="LIPOYL SYNTHASE, MITOCHONDRIAL"/>
    <property type="match status" value="1"/>
</dbReference>
<dbReference type="Pfam" id="PF16881">
    <property type="entry name" value="LIAS_N"/>
    <property type="match status" value="1"/>
</dbReference>
<dbReference type="Pfam" id="PF04055">
    <property type="entry name" value="Radical_SAM"/>
    <property type="match status" value="1"/>
</dbReference>
<dbReference type="PIRSF" id="PIRSF005963">
    <property type="entry name" value="Lipoyl_synth"/>
    <property type="match status" value="1"/>
</dbReference>
<dbReference type="SFLD" id="SFLDF00271">
    <property type="entry name" value="lipoyl_synthase"/>
    <property type="match status" value="1"/>
</dbReference>
<dbReference type="SFLD" id="SFLDG01058">
    <property type="entry name" value="lipoyl_synthase_like"/>
    <property type="match status" value="1"/>
</dbReference>
<dbReference type="SMART" id="SM00729">
    <property type="entry name" value="Elp3"/>
    <property type="match status" value="1"/>
</dbReference>
<dbReference type="SUPFAM" id="SSF102114">
    <property type="entry name" value="Radical SAM enzymes"/>
    <property type="match status" value="1"/>
</dbReference>
<dbReference type="PROSITE" id="PS51918">
    <property type="entry name" value="RADICAL_SAM"/>
    <property type="match status" value="1"/>
</dbReference>